<keyword id="KW-0814">Transposable element</keyword>
<name>YCH5_YEAST</name>
<reference key="1">
    <citation type="journal article" date="1992" name="Nature">
        <title>The complete DNA sequence of yeast chromosome III.</title>
        <authorList>
            <person name="Oliver S.G."/>
            <person name="van der Aart Q.J.M."/>
            <person name="Agostoni-Carbone M.L."/>
            <person name="Aigle M."/>
            <person name="Alberghina L."/>
            <person name="Alexandraki D."/>
            <person name="Antoine G."/>
            <person name="Anwar R."/>
            <person name="Ballesta J.P.G."/>
            <person name="Benit P."/>
            <person name="Berben G."/>
            <person name="Bergantino E."/>
            <person name="Biteau N."/>
            <person name="Bolle P.-A."/>
            <person name="Bolotin-Fukuhara M."/>
            <person name="Brown A."/>
            <person name="Brown A.J.P."/>
            <person name="Buhler J.-M."/>
            <person name="Carcano C."/>
            <person name="Carignani G."/>
            <person name="Cederberg H."/>
            <person name="Chanet R."/>
            <person name="Contreras R."/>
            <person name="Crouzet M."/>
            <person name="Daignan-Fornier B."/>
            <person name="Defoor E."/>
            <person name="Delgado M.D."/>
            <person name="Demolder J."/>
            <person name="Doira C."/>
            <person name="Dubois E."/>
            <person name="Dujon B."/>
            <person name="Duesterhoeft A."/>
            <person name="Erdmann D."/>
            <person name="Esteban M."/>
            <person name="Fabre F."/>
            <person name="Fairhead C."/>
            <person name="Faye G."/>
            <person name="Feldmann H."/>
            <person name="Fiers W."/>
            <person name="Francingues-Gaillard M.-C."/>
            <person name="Franco L."/>
            <person name="Frontali L."/>
            <person name="Fukuhara H."/>
            <person name="Fuller L.J."/>
            <person name="Galland P."/>
            <person name="Gent M.E."/>
            <person name="Gigot D."/>
            <person name="Gilliquet V."/>
            <person name="Glansdorff N."/>
            <person name="Goffeau A."/>
            <person name="Grenson M."/>
            <person name="Grisanti P."/>
            <person name="Grivell L.A."/>
            <person name="de Haan M."/>
            <person name="Haasemann M."/>
            <person name="Hatat D."/>
            <person name="Hoenicka J."/>
            <person name="Hegemann J.H."/>
            <person name="Herbert C.J."/>
            <person name="Hilger F."/>
            <person name="Hohmann S."/>
            <person name="Hollenberg C.P."/>
            <person name="Huse K."/>
            <person name="Iborra F."/>
            <person name="Indge K.J."/>
            <person name="Isono K."/>
            <person name="Jacq C."/>
            <person name="Jacquet M."/>
            <person name="James C.M."/>
            <person name="Jauniaux J.-C."/>
            <person name="Jia Y."/>
            <person name="Jimenez A."/>
            <person name="Kelly A."/>
            <person name="Kleinhans U."/>
            <person name="Kreisl P."/>
            <person name="Lanfranchi G."/>
            <person name="Lewis C."/>
            <person name="van der Linden C.G."/>
            <person name="Lucchini G."/>
            <person name="Lutzenkirchen K."/>
            <person name="Maat M.J."/>
            <person name="Mallet L."/>
            <person name="Mannhaupt G."/>
            <person name="Martegani E."/>
            <person name="Mathieu A."/>
            <person name="Maurer C.T.C."/>
            <person name="McConnell D."/>
            <person name="McKee R.A."/>
            <person name="Messenguy F."/>
            <person name="Mewes H.-W."/>
            <person name="Molemans F."/>
            <person name="Montague M.A."/>
            <person name="Muzi Falconi M."/>
            <person name="Navas L."/>
            <person name="Newlon C.S."/>
            <person name="Noone D."/>
            <person name="Pallier C."/>
            <person name="Panzeri L."/>
            <person name="Pearson B.M."/>
            <person name="Perea J."/>
            <person name="Philippsen P."/>
            <person name="Pierard A."/>
            <person name="Planta R.J."/>
            <person name="Plevani P."/>
            <person name="Poetsch B."/>
            <person name="Pohl F.M."/>
            <person name="Purnelle B."/>
            <person name="Ramezani Rad M."/>
            <person name="Rasmussen S.W."/>
            <person name="Raynal A."/>
            <person name="Remacha M.A."/>
            <person name="Richterich P."/>
            <person name="Roberts A.B."/>
            <person name="Rodriguez F."/>
            <person name="Sanz E."/>
            <person name="Schaaff-Gerstenschlaeger I."/>
            <person name="Scherens B."/>
            <person name="Schweitzer B."/>
            <person name="Shu Y."/>
            <person name="Skala J."/>
            <person name="Slonimski P.P."/>
            <person name="Sor F."/>
            <person name="Soustelle C."/>
            <person name="Spiegelberg R."/>
            <person name="Stateva L.I."/>
            <person name="Steensma H.Y."/>
            <person name="Steiner S."/>
            <person name="Thierry A."/>
            <person name="Thireos G."/>
            <person name="Tzermia M."/>
            <person name="Urrestarazu L.A."/>
            <person name="Valle G."/>
            <person name="Vetter I."/>
            <person name="van Vliet-Reedijk J.C."/>
            <person name="Voet M."/>
            <person name="Volckaert G."/>
            <person name="Vreken P."/>
            <person name="Wang H."/>
            <person name="Warmington J.R."/>
            <person name="von Wettstein D."/>
            <person name="Wicksteed B.L."/>
            <person name="Wilson C."/>
            <person name="Wurst H."/>
            <person name="Xu G."/>
            <person name="Yoshikawa A."/>
            <person name="Zimmermann F.K."/>
            <person name="Sgouros J.G."/>
        </authorList>
    </citation>
    <scope>NUCLEOTIDE SEQUENCE [LARGE SCALE GENOMIC DNA]</scope>
    <source>
        <strain>ATCC 204508 / S288c</strain>
    </source>
</reference>
<reference key="2">
    <citation type="journal article" date="2014" name="G3 (Bethesda)">
        <title>The reference genome sequence of Saccharomyces cerevisiae: Then and now.</title>
        <authorList>
            <person name="Engel S.R."/>
            <person name="Dietrich F.S."/>
            <person name="Fisk D.G."/>
            <person name="Binkley G."/>
            <person name="Balakrishnan R."/>
            <person name="Costanzo M.C."/>
            <person name="Dwight S.S."/>
            <person name="Hitz B.C."/>
            <person name="Karra K."/>
            <person name="Nash R.S."/>
            <person name="Weng S."/>
            <person name="Wong E.D."/>
            <person name="Lloyd P."/>
            <person name="Skrzypek M.S."/>
            <person name="Miyasato S.R."/>
            <person name="Simison M."/>
            <person name="Cherry J.M."/>
        </authorList>
    </citation>
    <scope>GENOME REANNOTATION</scope>
    <source>
        <strain>ATCC 204508 / S288c</strain>
    </source>
</reference>
<reference key="3">
    <citation type="journal article" date="2007" name="Genome Res.">
        <title>Approaching a complete repository of sequence-verified protein-encoding clones for Saccharomyces cerevisiae.</title>
        <authorList>
            <person name="Hu Y."/>
            <person name="Rolfs A."/>
            <person name="Bhullar B."/>
            <person name="Murthy T.V.S."/>
            <person name="Zhu C."/>
            <person name="Berger M.F."/>
            <person name="Camargo A.A."/>
            <person name="Kelley F."/>
            <person name="McCarron S."/>
            <person name="Jepson D."/>
            <person name="Richardson A."/>
            <person name="Raphael J."/>
            <person name="Moreira D."/>
            <person name="Taycher E."/>
            <person name="Zuo D."/>
            <person name="Mohr S."/>
            <person name="Kane M.F."/>
            <person name="Williamson J."/>
            <person name="Simpson A.J.G."/>
            <person name="Bulyk M.L."/>
            <person name="Harlow E."/>
            <person name="Marsischky G."/>
            <person name="Kolodner R.D."/>
            <person name="LaBaer J."/>
        </authorList>
    </citation>
    <scope>NUCLEOTIDE SEQUENCE [GENOMIC DNA]</scope>
    <source>
        <strain>ATCC 204508 / S288c</strain>
    </source>
</reference>
<reference key="4">
    <citation type="journal article" date="1992" name="Nature">
        <title>Yeast retrotransposon revealed.</title>
        <authorList>
            <person name="Voytas D.F."/>
            <person name="Boeke J.D."/>
        </authorList>
    </citation>
    <scope>IDENTIFICATION AS PART OF TRANSPOSON TY5-1</scope>
</reference>
<gene>
    <name type="primary">TY5B</name>
    <name type="ordered locus">YCL075W</name>
    <name type="ORF">YCL75W</name>
</gene>
<feature type="chain" id="PRO_0000203504" description="Putative transposon Ty5-1 protein YCL075W">
    <location>
        <begin position="1"/>
        <end position="146"/>
    </location>
</feature>
<dbReference type="EMBL" id="X59720">
    <property type="status" value="NOT_ANNOTATED_CDS"/>
    <property type="molecule type" value="Genomic_DNA"/>
</dbReference>
<dbReference type="EMBL" id="AY558370">
    <property type="protein sequence ID" value="AAS56696.1"/>
    <property type="molecule type" value="Genomic_DNA"/>
</dbReference>
<dbReference type="PIR" id="S19407">
    <property type="entry name" value="S19407"/>
</dbReference>
<dbReference type="IntAct" id="P25601">
    <property type="interactions" value="1"/>
</dbReference>
<dbReference type="AGR" id="SGD:S000000580"/>
<dbReference type="SGD" id="S000000580">
    <property type="gene designation" value="YCL075W"/>
</dbReference>
<dbReference type="InterPro" id="IPR054722">
    <property type="entry name" value="PolX-like_BBD"/>
</dbReference>
<dbReference type="Pfam" id="PF22936">
    <property type="entry name" value="Pol_BBD"/>
    <property type="match status" value="1"/>
</dbReference>
<evidence type="ECO:0000305" key="1">
    <source>
    </source>
</evidence>
<evidence type="ECO:0000305" key="2">
    <source>
    </source>
</evidence>
<organism>
    <name type="scientific">Saccharomyces cerevisiae (strain ATCC 204508 / S288c)</name>
    <name type="common">Baker's yeast</name>
    <dbReference type="NCBI Taxonomy" id="559292"/>
    <lineage>
        <taxon>Eukaryota</taxon>
        <taxon>Fungi</taxon>
        <taxon>Dikarya</taxon>
        <taxon>Ascomycota</taxon>
        <taxon>Saccharomycotina</taxon>
        <taxon>Saccharomycetes</taxon>
        <taxon>Saccharomycetales</taxon>
        <taxon>Saccharomycetaceae</taxon>
        <taxon>Saccharomyces</taxon>
    </lineage>
</organism>
<comment type="caution">
    <text evidence="1 2">Could be the product of a pseudogene unlikely to encode a functional protein. This is a truncated part of a POL protein in the mutated, non-functional YCLWTy5-1 transposon. Because of that it is not part of the S.cerevisiae S288c complete/reference proteome set.</text>
</comment>
<sequence>MYIIYGADHRISNCSLLKRRIPEARIFKLYPNDKTSRSSSASVAIPDYETQGQTAGQITPKSWLCMLSSTVPATKSSEWIFDTGCTSHMCHDRSIFSSFTRSSRKDFVRGVGGSIPIMGSGTVNIGTVQLHDVSYVPDLPVNLISV</sequence>
<protein>
    <recommendedName>
        <fullName>Putative transposon Ty5-1 protein YCL075W</fullName>
    </recommendedName>
</protein>
<proteinExistence type="uncertain"/>
<accession>P25601</accession>